<proteinExistence type="inferred from homology"/>
<dbReference type="EMBL" id="CU928162">
    <property type="protein sequence ID" value="CAR09894.1"/>
    <property type="molecule type" value="Genomic_DNA"/>
</dbReference>
<dbReference type="RefSeq" id="WP_000854033.1">
    <property type="nucleotide sequence ID" value="NC_011745.1"/>
</dbReference>
<dbReference type="SMR" id="B7N0M6"/>
<dbReference type="KEGG" id="ecq:ECED1_3891"/>
<dbReference type="HOGENOM" id="CLU_018816_15_2_6"/>
<dbReference type="Proteomes" id="UP000000748">
    <property type="component" value="Chromosome"/>
</dbReference>
<dbReference type="GO" id="GO:0005886">
    <property type="term" value="C:plasma membrane"/>
    <property type="evidence" value="ECO:0007669"/>
    <property type="project" value="UniProtKB-SubCell"/>
</dbReference>
<dbReference type="GO" id="GO:0022857">
    <property type="term" value="F:transmembrane transporter activity"/>
    <property type="evidence" value="ECO:0007669"/>
    <property type="project" value="UniProtKB-UniRule"/>
</dbReference>
<dbReference type="FunFam" id="2.40.30.170:FF:000002">
    <property type="entry name" value="p-hydroxybenzoic acid efflux pump subunit AaeA"/>
    <property type="match status" value="1"/>
</dbReference>
<dbReference type="FunFam" id="2.40.50.100:FF:000018">
    <property type="entry name" value="p-hydroxybenzoic acid efflux pump subunit AaeA"/>
    <property type="match status" value="1"/>
</dbReference>
<dbReference type="Gene3D" id="2.40.30.170">
    <property type="match status" value="1"/>
</dbReference>
<dbReference type="Gene3D" id="2.40.50.100">
    <property type="match status" value="1"/>
</dbReference>
<dbReference type="HAMAP" id="MF_01544">
    <property type="entry name" value="AaeA"/>
    <property type="match status" value="1"/>
</dbReference>
<dbReference type="InterPro" id="IPR043602">
    <property type="entry name" value="CusB-like_dom_1"/>
</dbReference>
<dbReference type="InterPro" id="IPR032317">
    <property type="entry name" value="CusB_D23"/>
</dbReference>
<dbReference type="InterPro" id="IPR050393">
    <property type="entry name" value="MFP_Efflux_Pump"/>
</dbReference>
<dbReference type="InterPro" id="IPR022871">
    <property type="entry name" value="PHBA_efflux_pump_AaeA"/>
</dbReference>
<dbReference type="InterPro" id="IPR006143">
    <property type="entry name" value="RND_pump_MFP"/>
</dbReference>
<dbReference type="NCBIfam" id="NF007850">
    <property type="entry name" value="PRK10559.1"/>
    <property type="match status" value="1"/>
</dbReference>
<dbReference type="NCBIfam" id="TIGR01730">
    <property type="entry name" value="RND_mfp"/>
    <property type="match status" value="1"/>
</dbReference>
<dbReference type="PANTHER" id="PTHR30367:SF12">
    <property type="entry name" value="P-HYDROXYBENZOIC ACID EFFLUX PUMP SUBUNIT AAEA"/>
    <property type="match status" value="1"/>
</dbReference>
<dbReference type="PANTHER" id="PTHR30367">
    <property type="entry name" value="P-HYDROXYBENZOIC ACID EFFLUX PUMP SUBUNIT AAEA-RELATED"/>
    <property type="match status" value="1"/>
</dbReference>
<dbReference type="Pfam" id="PF00529">
    <property type="entry name" value="CusB_dom_1"/>
    <property type="match status" value="1"/>
</dbReference>
<dbReference type="Pfam" id="PF16576">
    <property type="entry name" value="HlyD_D23"/>
    <property type="match status" value="1"/>
</dbReference>
<dbReference type="SUPFAM" id="SSF111369">
    <property type="entry name" value="HlyD-like secretion proteins"/>
    <property type="match status" value="1"/>
</dbReference>
<feature type="chain" id="PRO_1000185274" description="p-hydroxybenzoic acid efflux pump subunit AaeA">
    <location>
        <begin position="1"/>
        <end position="310"/>
    </location>
</feature>
<feature type="transmembrane region" description="Helical" evidence="1">
    <location>
        <begin position="12"/>
        <end position="32"/>
    </location>
</feature>
<comment type="function">
    <text evidence="1">Forms an efflux pump with AaeB.</text>
</comment>
<comment type="subcellular location">
    <subcellularLocation>
        <location evidence="1">Cell inner membrane</location>
        <topology evidence="1">Single-pass membrane protein</topology>
    </subcellularLocation>
</comment>
<comment type="induction">
    <text evidence="1">Positively coregulated with aaeB and aaeX by AaeR.</text>
</comment>
<comment type="similarity">
    <text evidence="1">Belongs to the membrane fusion protein (MFP) (TC 8.A.1) family.</text>
</comment>
<sequence length="310" mass="34761">MKTLIRKFSRTAITVVLVILAFIAIFNAWVYYTESPWTRDARFSADVVAIAPDVSGLITQVNVHDNQLVKKGQVLFTIDQPRYQKALEEAQADVAYYQVLAQEKRQEAGRRNRLGVQAMSREEIDQANNVLQTVLHQLAKAQATRDLAKLDLERTVIRAPADGWVTNLNVYTGEFITRGSTAVALVKQNSFYVLAYMEETKLEGVRPGYRAEITPLGSNKVLKGTVDSVAAGVTNASSTRDDKGMATIDSNLEWVRLAQRVPVRIRLDNQQENIWPAGTTATVVVTGKQDRDESQDSFFRKMAHRLREFG</sequence>
<organism>
    <name type="scientific">Escherichia coli O81 (strain ED1a)</name>
    <dbReference type="NCBI Taxonomy" id="585397"/>
    <lineage>
        <taxon>Bacteria</taxon>
        <taxon>Pseudomonadati</taxon>
        <taxon>Pseudomonadota</taxon>
        <taxon>Gammaproteobacteria</taxon>
        <taxon>Enterobacterales</taxon>
        <taxon>Enterobacteriaceae</taxon>
        <taxon>Escherichia</taxon>
    </lineage>
</organism>
<keyword id="KW-0997">Cell inner membrane</keyword>
<keyword id="KW-1003">Cell membrane</keyword>
<keyword id="KW-0472">Membrane</keyword>
<keyword id="KW-0812">Transmembrane</keyword>
<keyword id="KW-1133">Transmembrane helix</keyword>
<keyword id="KW-0813">Transport</keyword>
<reference key="1">
    <citation type="journal article" date="2009" name="PLoS Genet.">
        <title>Organised genome dynamics in the Escherichia coli species results in highly diverse adaptive paths.</title>
        <authorList>
            <person name="Touchon M."/>
            <person name="Hoede C."/>
            <person name="Tenaillon O."/>
            <person name="Barbe V."/>
            <person name="Baeriswyl S."/>
            <person name="Bidet P."/>
            <person name="Bingen E."/>
            <person name="Bonacorsi S."/>
            <person name="Bouchier C."/>
            <person name="Bouvet O."/>
            <person name="Calteau A."/>
            <person name="Chiapello H."/>
            <person name="Clermont O."/>
            <person name="Cruveiller S."/>
            <person name="Danchin A."/>
            <person name="Diard M."/>
            <person name="Dossat C."/>
            <person name="Karoui M.E."/>
            <person name="Frapy E."/>
            <person name="Garry L."/>
            <person name="Ghigo J.M."/>
            <person name="Gilles A.M."/>
            <person name="Johnson J."/>
            <person name="Le Bouguenec C."/>
            <person name="Lescat M."/>
            <person name="Mangenot S."/>
            <person name="Martinez-Jehanne V."/>
            <person name="Matic I."/>
            <person name="Nassif X."/>
            <person name="Oztas S."/>
            <person name="Petit M.A."/>
            <person name="Pichon C."/>
            <person name="Rouy Z."/>
            <person name="Ruf C.S."/>
            <person name="Schneider D."/>
            <person name="Tourret J."/>
            <person name="Vacherie B."/>
            <person name="Vallenet D."/>
            <person name="Medigue C."/>
            <person name="Rocha E.P.C."/>
            <person name="Denamur E."/>
        </authorList>
    </citation>
    <scope>NUCLEOTIDE SEQUENCE [LARGE SCALE GENOMIC DNA]</scope>
    <source>
        <strain>ED1a</strain>
    </source>
</reference>
<gene>
    <name evidence="1" type="primary">aaeA</name>
    <name type="ordered locus">ECED1_3891</name>
</gene>
<name>AAEA_ECO81</name>
<protein>
    <recommendedName>
        <fullName evidence="1">p-hydroxybenzoic acid efflux pump subunit AaeA</fullName>
        <shortName evidence="1">pHBA efflux pump protein A</shortName>
    </recommendedName>
</protein>
<accession>B7N0M6</accession>
<evidence type="ECO:0000255" key="1">
    <source>
        <dbReference type="HAMAP-Rule" id="MF_01544"/>
    </source>
</evidence>